<reference key="1">
    <citation type="journal article" date="2002" name="Nature">
        <title>The genome sequence of Schizosaccharomyces pombe.</title>
        <authorList>
            <person name="Wood V."/>
            <person name="Gwilliam R."/>
            <person name="Rajandream M.A."/>
            <person name="Lyne M.H."/>
            <person name="Lyne R."/>
            <person name="Stewart A."/>
            <person name="Sgouros J.G."/>
            <person name="Peat N."/>
            <person name="Hayles J."/>
            <person name="Baker S.G."/>
            <person name="Basham D."/>
            <person name="Bowman S."/>
            <person name="Brooks K."/>
            <person name="Brown D."/>
            <person name="Brown S."/>
            <person name="Chillingworth T."/>
            <person name="Churcher C.M."/>
            <person name="Collins M."/>
            <person name="Connor R."/>
            <person name="Cronin A."/>
            <person name="Davis P."/>
            <person name="Feltwell T."/>
            <person name="Fraser A."/>
            <person name="Gentles S."/>
            <person name="Goble A."/>
            <person name="Hamlin N."/>
            <person name="Harris D.E."/>
            <person name="Hidalgo J."/>
            <person name="Hodgson G."/>
            <person name="Holroyd S."/>
            <person name="Hornsby T."/>
            <person name="Howarth S."/>
            <person name="Huckle E.J."/>
            <person name="Hunt S."/>
            <person name="Jagels K."/>
            <person name="James K.D."/>
            <person name="Jones L."/>
            <person name="Jones M."/>
            <person name="Leather S."/>
            <person name="McDonald S."/>
            <person name="McLean J."/>
            <person name="Mooney P."/>
            <person name="Moule S."/>
            <person name="Mungall K.L."/>
            <person name="Murphy L.D."/>
            <person name="Niblett D."/>
            <person name="Odell C."/>
            <person name="Oliver K."/>
            <person name="O'Neil S."/>
            <person name="Pearson D."/>
            <person name="Quail M.A."/>
            <person name="Rabbinowitsch E."/>
            <person name="Rutherford K.M."/>
            <person name="Rutter S."/>
            <person name="Saunders D."/>
            <person name="Seeger K."/>
            <person name="Sharp S."/>
            <person name="Skelton J."/>
            <person name="Simmonds M.N."/>
            <person name="Squares R."/>
            <person name="Squares S."/>
            <person name="Stevens K."/>
            <person name="Taylor K."/>
            <person name="Taylor R.G."/>
            <person name="Tivey A."/>
            <person name="Walsh S.V."/>
            <person name="Warren T."/>
            <person name="Whitehead S."/>
            <person name="Woodward J.R."/>
            <person name="Volckaert G."/>
            <person name="Aert R."/>
            <person name="Robben J."/>
            <person name="Grymonprez B."/>
            <person name="Weltjens I."/>
            <person name="Vanstreels E."/>
            <person name="Rieger M."/>
            <person name="Schaefer M."/>
            <person name="Mueller-Auer S."/>
            <person name="Gabel C."/>
            <person name="Fuchs M."/>
            <person name="Duesterhoeft A."/>
            <person name="Fritzc C."/>
            <person name="Holzer E."/>
            <person name="Moestl D."/>
            <person name="Hilbert H."/>
            <person name="Borzym K."/>
            <person name="Langer I."/>
            <person name="Beck A."/>
            <person name="Lehrach H."/>
            <person name="Reinhardt R."/>
            <person name="Pohl T.M."/>
            <person name="Eger P."/>
            <person name="Zimmermann W."/>
            <person name="Wedler H."/>
            <person name="Wambutt R."/>
            <person name="Purnelle B."/>
            <person name="Goffeau A."/>
            <person name="Cadieu E."/>
            <person name="Dreano S."/>
            <person name="Gloux S."/>
            <person name="Lelaure V."/>
            <person name="Mottier S."/>
            <person name="Galibert F."/>
            <person name="Aves S.J."/>
            <person name="Xiang Z."/>
            <person name="Hunt C."/>
            <person name="Moore K."/>
            <person name="Hurst S.M."/>
            <person name="Lucas M."/>
            <person name="Rochet M."/>
            <person name="Gaillardin C."/>
            <person name="Tallada V.A."/>
            <person name="Garzon A."/>
            <person name="Thode G."/>
            <person name="Daga R.R."/>
            <person name="Cruzado L."/>
            <person name="Jimenez J."/>
            <person name="Sanchez M."/>
            <person name="del Rey F."/>
            <person name="Benito J."/>
            <person name="Dominguez A."/>
            <person name="Revuelta J.L."/>
            <person name="Moreno S."/>
            <person name="Armstrong J."/>
            <person name="Forsburg S.L."/>
            <person name="Cerutti L."/>
            <person name="Lowe T."/>
            <person name="McCombie W.R."/>
            <person name="Paulsen I."/>
            <person name="Potashkin J."/>
            <person name="Shpakovski G.V."/>
            <person name="Ussery D."/>
            <person name="Barrell B.G."/>
            <person name="Nurse P."/>
        </authorList>
    </citation>
    <scope>NUCLEOTIDE SEQUENCE [LARGE SCALE GENOMIC DNA]</scope>
    <source>
        <strain>972 / ATCC 24843</strain>
    </source>
</reference>
<reference key="2">
    <citation type="journal article" date="2006" name="Nat. Biotechnol.">
        <title>ORFeome cloning and global analysis of protein localization in the fission yeast Schizosaccharomyces pombe.</title>
        <authorList>
            <person name="Matsuyama A."/>
            <person name="Arai R."/>
            <person name="Yashiroda Y."/>
            <person name="Shirai A."/>
            <person name="Kamata A."/>
            <person name="Sekido S."/>
            <person name="Kobayashi Y."/>
            <person name="Hashimoto A."/>
            <person name="Hamamoto M."/>
            <person name="Hiraoka Y."/>
            <person name="Horinouchi S."/>
            <person name="Yoshida M."/>
        </authorList>
    </citation>
    <scope>SUBCELLULAR LOCATION [LARGE SCALE ANALYSIS]</scope>
</reference>
<proteinExistence type="inferred from homology"/>
<comment type="function">
    <text evidence="1">May act as a cytoplasmic retention protein with a role in regulating nuclear transport.</text>
</comment>
<comment type="subcellular location">
    <subcellularLocation>
        <location evidence="5">Cytoplasm</location>
    </subcellularLocation>
</comment>
<evidence type="ECO:0000250" key="1"/>
<evidence type="ECO:0000255" key="2">
    <source>
        <dbReference type="PROSITE-ProRule" id="PRU00175"/>
    </source>
</evidence>
<evidence type="ECO:0000255" key="3">
    <source>
        <dbReference type="PROSITE-ProRule" id="PRU00502"/>
    </source>
</evidence>
<evidence type="ECO:0000256" key="4">
    <source>
        <dbReference type="SAM" id="MobiDB-lite"/>
    </source>
</evidence>
<evidence type="ECO:0000269" key="5">
    <source>
    </source>
</evidence>
<accession>O13747</accession>
<organism>
    <name type="scientific">Schizosaccharomyces pombe (strain 972 / ATCC 24843)</name>
    <name type="common">Fission yeast</name>
    <dbReference type="NCBI Taxonomy" id="284812"/>
    <lineage>
        <taxon>Eukaryota</taxon>
        <taxon>Fungi</taxon>
        <taxon>Dikarya</taxon>
        <taxon>Ascomycota</taxon>
        <taxon>Taphrinomycotina</taxon>
        <taxon>Schizosaccharomycetes</taxon>
        <taxon>Schizosaccharomycetales</taxon>
        <taxon>Schizosaccharomycetaceae</taxon>
        <taxon>Schizosaccharomyces</taxon>
    </lineage>
</organism>
<dbReference type="EMBL" id="CU329670">
    <property type="protein sequence ID" value="CAB11041.1"/>
    <property type="molecule type" value="Genomic_DNA"/>
</dbReference>
<dbReference type="PIR" id="T37793">
    <property type="entry name" value="T37793"/>
</dbReference>
<dbReference type="RefSeq" id="NP_594226.1">
    <property type="nucleotide sequence ID" value="NM_001019649.2"/>
</dbReference>
<dbReference type="SMR" id="O13747"/>
<dbReference type="BioGRID" id="278799">
    <property type="interactions" value="1"/>
</dbReference>
<dbReference type="FunCoup" id="O13747">
    <property type="interactions" value="983"/>
</dbReference>
<dbReference type="STRING" id="284812.O13747"/>
<dbReference type="iPTMnet" id="O13747"/>
<dbReference type="PaxDb" id="4896-SPAC16E8.13.1"/>
<dbReference type="EnsemblFungi" id="SPAC16E8.13.1">
    <property type="protein sequence ID" value="SPAC16E8.13.1:pep"/>
    <property type="gene ID" value="SPAC16E8.13"/>
</dbReference>
<dbReference type="KEGG" id="spo:2542333"/>
<dbReference type="PomBase" id="SPAC16E8.13"/>
<dbReference type="VEuPathDB" id="FungiDB:SPAC16E8.13"/>
<dbReference type="eggNOG" id="KOG0804">
    <property type="taxonomic scope" value="Eukaryota"/>
</dbReference>
<dbReference type="HOGENOM" id="CLU_009969_0_1_1"/>
<dbReference type="InParanoid" id="O13747"/>
<dbReference type="OMA" id="RFNSIEP"/>
<dbReference type="PhylomeDB" id="O13747"/>
<dbReference type="PRO" id="PR:O13747"/>
<dbReference type="Proteomes" id="UP000002485">
    <property type="component" value="Chromosome I"/>
</dbReference>
<dbReference type="GO" id="GO:0005737">
    <property type="term" value="C:cytoplasm"/>
    <property type="evidence" value="ECO:0000318"/>
    <property type="project" value="GO_Central"/>
</dbReference>
<dbReference type="GO" id="GO:0005829">
    <property type="term" value="C:cytosol"/>
    <property type="evidence" value="ECO:0007005"/>
    <property type="project" value="PomBase"/>
</dbReference>
<dbReference type="GO" id="GO:0061630">
    <property type="term" value="F:ubiquitin protein ligase activity"/>
    <property type="evidence" value="ECO:0000318"/>
    <property type="project" value="GO_Central"/>
</dbReference>
<dbReference type="GO" id="GO:0008270">
    <property type="term" value="F:zinc ion binding"/>
    <property type="evidence" value="ECO:0000255"/>
    <property type="project" value="PomBase"/>
</dbReference>
<dbReference type="GO" id="GO:0016567">
    <property type="term" value="P:protein ubiquitination"/>
    <property type="evidence" value="ECO:0000318"/>
    <property type="project" value="GO_Central"/>
</dbReference>
<dbReference type="GO" id="GO:0007265">
    <property type="term" value="P:Ras protein signal transduction"/>
    <property type="evidence" value="ECO:0000318"/>
    <property type="project" value="GO_Central"/>
</dbReference>
<dbReference type="GO" id="GO:0023051">
    <property type="term" value="P:regulation of signaling"/>
    <property type="evidence" value="ECO:0000250"/>
    <property type="project" value="PomBase"/>
</dbReference>
<dbReference type="CDD" id="cd16457">
    <property type="entry name" value="RING-H2_BRAP2"/>
    <property type="match status" value="1"/>
</dbReference>
<dbReference type="CDD" id="cd12717">
    <property type="entry name" value="RRM_ETP1"/>
    <property type="match status" value="1"/>
</dbReference>
<dbReference type="FunFam" id="3.30.40.10:FF:000576">
    <property type="entry name" value="RING finger protein ETP1"/>
    <property type="match status" value="1"/>
</dbReference>
<dbReference type="Gene3D" id="3.30.40.10">
    <property type="entry name" value="Zinc/RING finger domain, C3HC4 (zinc finger)"/>
    <property type="match status" value="2"/>
</dbReference>
<dbReference type="InterPro" id="IPR011422">
    <property type="entry name" value="BRAP2/ETP1_RRM"/>
</dbReference>
<dbReference type="InterPro" id="IPR034931">
    <property type="entry name" value="ETP1_RRM"/>
</dbReference>
<dbReference type="InterPro" id="IPR047243">
    <property type="entry name" value="RING-H2_BRAP2"/>
</dbReference>
<dbReference type="InterPro" id="IPR001841">
    <property type="entry name" value="Znf_RING"/>
</dbReference>
<dbReference type="InterPro" id="IPR013083">
    <property type="entry name" value="Znf_RING/FYVE/PHD"/>
</dbReference>
<dbReference type="InterPro" id="IPR001607">
    <property type="entry name" value="Znf_UBP"/>
</dbReference>
<dbReference type="PANTHER" id="PTHR24007">
    <property type="entry name" value="BRCA1-ASSOCIATED PROTEIN"/>
    <property type="match status" value="1"/>
</dbReference>
<dbReference type="PANTHER" id="PTHR24007:SF7">
    <property type="entry name" value="BRCA1-ASSOCIATED PROTEIN"/>
    <property type="match status" value="1"/>
</dbReference>
<dbReference type="Pfam" id="PF07576">
    <property type="entry name" value="BRAP2"/>
    <property type="match status" value="1"/>
</dbReference>
<dbReference type="Pfam" id="PF13639">
    <property type="entry name" value="zf-RING_2"/>
    <property type="match status" value="1"/>
</dbReference>
<dbReference type="Pfam" id="PF02148">
    <property type="entry name" value="zf-UBP"/>
    <property type="match status" value="1"/>
</dbReference>
<dbReference type="SMART" id="SM00184">
    <property type="entry name" value="RING"/>
    <property type="match status" value="1"/>
</dbReference>
<dbReference type="SMART" id="SM00290">
    <property type="entry name" value="ZnF_UBP"/>
    <property type="match status" value="1"/>
</dbReference>
<dbReference type="SUPFAM" id="SSF57850">
    <property type="entry name" value="RING/U-box"/>
    <property type="match status" value="2"/>
</dbReference>
<dbReference type="PROSITE" id="PS50089">
    <property type="entry name" value="ZF_RING_2"/>
    <property type="match status" value="1"/>
</dbReference>
<dbReference type="PROSITE" id="PS50271">
    <property type="entry name" value="ZF_UBP"/>
    <property type="match status" value="1"/>
</dbReference>
<name>EPT1_SCHPO</name>
<keyword id="KW-0963">Cytoplasm</keyword>
<keyword id="KW-0479">Metal-binding</keyword>
<keyword id="KW-1185">Reference proteome</keyword>
<keyword id="KW-0862">Zinc</keyword>
<keyword id="KW-0863">Zinc-finger</keyword>
<feature type="chain" id="PRO_0000056332" description="RING finger protein ETP1 homolog">
    <location>
        <begin position="1"/>
        <end position="547"/>
    </location>
</feature>
<feature type="zinc finger region" description="RING-type" evidence="2">
    <location>
        <begin position="208"/>
        <end position="248"/>
    </location>
</feature>
<feature type="zinc finger region" description="UBP-type; degenerate" evidence="3">
    <location>
        <begin position="245"/>
        <end position="338"/>
    </location>
</feature>
<feature type="region of interest" description="Disordered" evidence="4">
    <location>
        <begin position="514"/>
        <end position="547"/>
    </location>
</feature>
<feature type="compositionally biased region" description="Polar residues" evidence="4">
    <location>
        <begin position="514"/>
        <end position="523"/>
    </location>
</feature>
<feature type="compositionally biased region" description="Basic residues" evidence="4">
    <location>
        <begin position="526"/>
        <end position="535"/>
    </location>
</feature>
<feature type="binding site" evidence="3">
    <location>
        <position position="262"/>
    </location>
    <ligand>
        <name>Zn(2+)</name>
        <dbReference type="ChEBI" id="CHEBI:29105"/>
        <label>1</label>
    </ligand>
</feature>
<feature type="binding site" evidence="3">
    <location>
        <position position="265"/>
    </location>
    <ligand>
        <name>Zn(2+)</name>
        <dbReference type="ChEBI" id="CHEBI:29105"/>
        <label>1</label>
    </ligand>
</feature>
<feature type="binding site" evidence="3">
    <location>
        <position position="274"/>
    </location>
    <ligand>
        <name>Zn(2+)</name>
        <dbReference type="ChEBI" id="CHEBI:29105"/>
        <label>2</label>
    </ligand>
</feature>
<feature type="binding site" evidence="3">
    <location>
        <position position="277"/>
    </location>
    <ligand>
        <name>Zn(2+)</name>
        <dbReference type="ChEBI" id="CHEBI:29105"/>
        <label>2</label>
    </ligand>
</feature>
<feature type="binding site" evidence="3">
    <location>
        <position position="282"/>
    </location>
    <ligand>
        <name>Zn(2+)</name>
        <dbReference type="ChEBI" id="CHEBI:29105"/>
        <label>1</label>
    </ligand>
</feature>
<feature type="binding site" evidence="3">
    <location>
        <position position="289"/>
    </location>
    <ligand>
        <name>Zn(2+)</name>
        <dbReference type="ChEBI" id="CHEBI:29105"/>
        <label>1</label>
    </ligand>
</feature>
<feature type="binding site" evidence="3">
    <location>
        <position position="293"/>
    </location>
    <ligand>
        <name>Zn(2+)</name>
        <dbReference type="ChEBI" id="CHEBI:29105"/>
        <label>2</label>
    </ligand>
</feature>
<feature type="binding site" evidence="3">
    <location>
        <position position="299"/>
    </location>
    <ligand>
        <name>Zn(2+)</name>
        <dbReference type="ChEBI" id="CHEBI:29105"/>
        <label>2</label>
    </ligand>
</feature>
<gene>
    <name type="ORF">SPAC16E8.13</name>
</gene>
<protein>
    <recommendedName>
        <fullName>RING finger protein ETP1 homolog</fullName>
    </recommendedName>
    <alternativeName>
        <fullName>BRAP2 homolog</fullName>
    </alternativeName>
</protein>
<sequence>MYYYLEIECESPVKDIFTCNKRRASKVVGNSFGGDHFNFRLGEIKLLSMDFPSSKVPEVEETSLGHGVVHLYRVFPSESHEFDAPGLILAILAIPLYMSPSDVLGFLGEKHCKSIQHIRLLKTKDPNRIMALLKFKDQASVIRFYTEFNGKAFSQIDPETCHVLHIDKVNIKYPMESSDSSSTEQQLVGPSSKPFASTTPALIELPTCVVCLERMDSSITGLITIVCQHTFHCPCLQKWGNSSCPVCRYTQKVQSSEFQSKCTVCCYDKDLWICLICGNIGCGRYHDAHAKQHYVDTAHCYAMELETQRVWDYAGDNYVHRLLQSETDGKLVELSTDGKSSGWTGSSATESKLRDKMGLEYTQILVSQLESQRLYYESHLSNMSQKLSRVNEELVLKTKIATASSNANTDLRSRVDISESKLKKRDDKLKRVSSQLEHLKHNYEEEKSMNENLLVRIQTLEKQNTTKSDQIVSMQFQINDLNEQLRDLMFTISASQEIQKMGQSEELQNGTIVLPNNSTVRSNSVKSKKKKKKKPVVPSSSGSLGTD</sequence>